<keyword id="KW-0175">Coiled coil</keyword>
<keyword id="KW-1185">Reference proteome</keyword>
<comment type="similarity">
    <text evidence="3">Belongs to the GOLGA6 family.</text>
</comment>
<proteinExistence type="inferred from homology"/>
<reference key="1">
    <citation type="journal article" date="2006" name="Nature">
        <title>Analysis of the DNA sequence and duplication history of human chromosome 15.</title>
        <authorList>
            <person name="Zody M.C."/>
            <person name="Garber M."/>
            <person name="Sharpe T."/>
            <person name="Young S.K."/>
            <person name="Rowen L."/>
            <person name="O'Neill K."/>
            <person name="Whittaker C.A."/>
            <person name="Kamal M."/>
            <person name="Chang J.L."/>
            <person name="Cuomo C.A."/>
            <person name="Dewar K."/>
            <person name="FitzGerald M.G."/>
            <person name="Kodira C.D."/>
            <person name="Madan A."/>
            <person name="Qin S."/>
            <person name="Yang X."/>
            <person name="Abbasi N."/>
            <person name="Abouelleil A."/>
            <person name="Arachchi H.M."/>
            <person name="Baradarani L."/>
            <person name="Birditt B."/>
            <person name="Bloom S."/>
            <person name="Bloom T."/>
            <person name="Borowsky M.L."/>
            <person name="Burke J."/>
            <person name="Butler J."/>
            <person name="Cook A."/>
            <person name="DeArellano K."/>
            <person name="DeCaprio D."/>
            <person name="Dorris L. III"/>
            <person name="Dors M."/>
            <person name="Eichler E.E."/>
            <person name="Engels R."/>
            <person name="Fahey J."/>
            <person name="Fleetwood P."/>
            <person name="Friedman C."/>
            <person name="Gearin G."/>
            <person name="Hall J.L."/>
            <person name="Hensley G."/>
            <person name="Johnson E."/>
            <person name="Jones C."/>
            <person name="Kamat A."/>
            <person name="Kaur A."/>
            <person name="Locke D.P."/>
            <person name="Madan A."/>
            <person name="Munson G."/>
            <person name="Jaffe D.B."/>
            <person name="Lui A."/>
            <person name="Macdonald P."/>
            <person name="Mauceli E."/>
            <person name="Naylor J.W."/>
            <person name="Nesbitt R."/>
            <person name="Nicol R."/>
            <person name="O'Leary S.B."/>
            <person name="Ratcliffe A."/>
            <person name="Rounsley S."/>
            <person name="She X."/>
            <person name="Sneddon K.M.B."/>
            <person name="Stewart S."/>
            <person name="Sougnez C."/>
            <person name="Stone S.M."/>
            <person name="Topham K."/>
            <person name="Vincent D."/>
            <person name="Wang S."/>
            <person name="Zimmer A.R."/>
            <person name="Birren B.W."/>
            <person name="Hood L."/>
            <person name="Lander E.S."/>
            <person name="Nusbaum C."/>
        </authorList>
    </citation>
    <scope>NUCLEOTIDE SEQUENCE [LARGE SCALE GENOMIC DNA]</scope>
</reference>
<name>GG6LA_HUMAN</name>
<dbReference type="EMBL" id="AC243919">
    <property type="status" value="NOT_ANNOTATED_CDS"/>
    <property type="molecule type" value="Genomic_DNA"/>
</dbReference>
<dbReference type="CCDS" id="CCDS45325.2"/>
<dbReference type="RefSeq" id="NP_001157937.2">
    <property type="nucleotide sequence ID" value="NM_001164465.3"/>
</dbReference>
<dbReference type="SMR" id="A6NI86"/>
<dbReference type="BioGRID" id="571831">
    <property type="interactions" value="1"/>
</dbReference>
<dbReference type="IntAct" id="A6NI86">
    <property type="interactions" value="1"/>
</dbReference>
<dbReference type="STRING" id="9606.ENSP00000479362"/>
<dbReference type="GlyGen" id="A6NI86">
    <property type="glycosylation" value="1 site, 1 N-linked glycan (1 site)"/>
</dbReference>
<dbReference type="iPTMnet" id="A6NI86"/>
<dbReference type="PhosphoSitePlus" id="A6NI86"/>
<dbReference type="BioMuta" id="GOLGA6L10"/>
<dbReference type="jPOST" id="A6NI86"/>
<dbReference type="MassIVE" id="A6NI86"/>
<dbReference type="PaxDb" id="9606-ENSP00000479362"/>
<dbReference type="PeptideAtlas" id="A6NI86"/>
<dbReference type="ProteomicsDB" id="1256"/>
<dbReference type="DNASU" id="647042"/>
<dbReference type="Ensembl" id="ENST00000610657.2">
    <property type="protein sequence ID" value="ENSP00000479362.1"/>
    <property type="gene ID" value="ENSG00000278662.6"/>
</dbReference>
<dbReference type="GeneID" id="647042"/>
<dbReference type="KEGG" id="hsa:647042"/>
<dbReference type="MANE-Select" id="ENST00000610657.2">
    <property type="protein sequence ID" value="ENSP00000479362.1"/>
    <property type="RefSeq nucleotide sequence ID" value="NM_001164465.3"/>
    <property type="RefSeq protein sequence ID" value="NP_001157937.2"/>
</dbReference>
<dbReference type="UCSC" id="uc059mng.1">
    <property type="organism name" value="human"/>
</dbReference>
<dbReference type="AGR" id="HGNC:37228"/>
<dbReference type="CTD" id="647042"/>
<dbReference type="GeneCards" id="GOLGA6L10"/>
<dbReference type="HGNC" id="HGNC:37228">
    <property type="gene designation" value="GOLGA6L10"/>
</dbReference>
<dbReference type="HPA" id="ENSG00000278662">
    <property type="expression patterns" value="Tissue enhanced (testis)"/>
</dbReference>
<dbReference type="neXtProt" id="NX_A6NI86"/>
<dbReference type="PharmGKB" id="PA165478685"/>
<dbReference type="VEuPathDB" id="HostDB:ENSG00000278662"/>
<dbReference type="eggNOG" id="KOG4725">
    <property type="taxonomic scope" value="Eukaryota"/>
</dbReference>
<dbReference type="GeneTree" id="ENSGT00910000144587"/>
<dbReference type="InParanoid" id="A6NI86"/>
<dbReference type="OMA" id="ETKTWEA"/>
<dbReference type="OrthoDB" id="9488847at2759"/>
<dbReference type="PAN-GO" id="A6NI86">
    <property type="GO annotations" value="0 GO annotations based on evolutionary models"/>
</dbReference>
<dbReference type="TreeFam" id="TF316990"/>
<dbReference type="PathwayCommons" id="A6NI86"/>
<dbReference type="SignaLink" id="A6NI86"/>
<dbReference type="BioGRID-ORCS" id="647042">
    <property type="hits" value="126 hits in 657 CRISPR screens"/>
</dbReference>
<dbReference type="GenomeRNAi" id="647042"/>
<dbReference type="Pharos" id="A6NI86">
    <property type="development level" value="Tdark"/>
</dbReference>
<dbReference type="PRO" id="PR:A6NI86"/>
<dbReference type="Proteomes" id="UP000005640">
    <property type="component" value="Chromosome 15"/>
</dbReference>
<dbReference type="RNAct" id="A6NI86">
    <property type="molecule type" value="protein"/>
</dbReference>
<dbReference type="Bgee" id="ENSG00000278662">
    <property type="expression patterns" value="Expressed in cortical plate and 98 other cell types or tissues"/>
</dbReference>
<dbReference type="ExpressionAtlas" id="A6NI86">
    <property type="expression patterns" value="baseline and differential"/>
</dbReference>
<dbReference type="InterPro" id="IPR026737">
    <property type="entry name" value="GOLGA6L"/>
</dbReference>
<dbReference type="InterPro" id="IPR043976">
    <property type="entry name" value="GOLGA_cons_dom"/>
</dbReference>
<dbReference type="PANTHER" id="PTHR23143:SF19">
    <property type="entry name" value="GOLGIN SUBFAMILY A MEMBER 6-LIKE PROTEIN 10-RELATED"/>
    <property type="match status" value="1"/>
</dbReference>
<dbReference type="PANTHER" id="PTHR23143">
    <property type="entry name" value="TRICHOHYALIN-RELATED"/>
    <property type="match status" value="1"/>
</dbReference>
<dbReference type="Pfam" id="PF15070">
    <property type="entry name" value="GOLGA2L5"/>
    <property type="match status" value="1"/>
</dbReference>
<gene>
    <name evidence="4" type="primary">GOLGA6L10</name>
    <name evidence="4" type="synonym">GOLGA6L18</name>
</gene>
<organism>
    <name type="scientific">Homo sapiens</name>
    <name type="common">Human</name>
    <dbReference type="NCBI Taxonomy" id="9606"/>
    <lineage>
        <taxon>Eukaryota</taxon>
        <taxon>Metazoa</taxon>
        <taxon>Chordata</taxon>
        <taxon>Craniata</taxon>
        <taxon>Vertebrata</taxon>
        <taxon>Euteleostomi</taxon>
        <taxon>Mammalia</taxon>
        <taxon>Eutheria</taxon>
        <taxon>Euarchontoglires</taxon>
        <taxon>Primates</taxon>
        <taxon>Haplorrhini</taxon>
        <taxon>Catarrhini</taxon>
        <taxon>Hominidae</taxon>
        <taxon>Homo</taxon>
    </lineage>
</organism>
<evidence type="ECO:0000255" key="1"/>
<evidence type="ECO:0000256" key="2">
    <source>
        <dbReference type="SAM" id="MobiDB-lite"/>
    </source>
</evidence>
<evidence type="ECO:0000305" key="3"/>
<evidence type="ECO:0000312" key="4">
    <source>
        <dbReference type="HGNC" id="HGNC:37228"/>
    </source>
</evidence>
<accession>A6NI86</accession>
<accession>A0A087WVD5</accession>
<accession>D6RB28</accession>
<feature type="chain" id="PRO_0000342266" description="Golgin subfamily A member 6-like protein 10">
    <location>
        <begin position="1"/>
        <end position="522"/>
    </location>
</feature>
<feature type="region of interest" description="Disordered" evidence="2">
    <location>
        <begin position="1"/>
        <end position="77"/>
    </location>
</feature>
<feature type="region of interest" description="Disordered" evidence="2">
    <location>
        <begin position="439"/>
        <end position="503"/>
    </location>
</feature>
<feature type="coiled-coil region" evidence="1">
    <location>
        <begin position="157"/>
        <end position="328"/>
    </location>
</feature>
<feature type="compositionally biased region" description="Pro residues" evidence="2">
    <location>
        <begin position="1"/>
        <end position="11"/>
    </location>
</feature>
<feature type="compositionally biased region" description="Polar residues" evidence="2">
    <location>
        <begin position="51"/>
        <end position="62"/>
    </location>
</feature>
<feature type="compositionally biased region" description="Basic and acidic residues" evidence="2">
    <location>
        <begin position="439"/>
        <end position="452"/>
    </location>
</feature>
<feature type="compositionally biased region" description="Low complexity" evidence="2">
    <location>
        <begin position="456"/>
        <end position="471"/>
    </location>
</feature>
<feature type="compositionally biased region" description="Low complexity" evidence="2">
    <location>
        <begin position="489"/>
        <end position="503"/>
    </location>
</feature>
<sequence length="522" mass="60902">MWPQPRLPPHPAMSEKTQQGKLAAAKKKLKAYWQRKSPGIPAGANRKKKVNGSSPDTATSGGYHSPGDSATGIYGEGRASSTTLQDLESQYQELAVALDSSSAIISQLTENINSLVRTSKEEKKHEIHLVQKLGRSLFKLKNQTAEPLAPEPPAGPSKVEQLQDETNHLRKELESVGRQLQAEVENNQMLSLLNRRQEERLREQEERLHEQEERLHEQEERLCEQEERLREQEERLCEQEERLREQEERLCEQEERLREQEERLCEQEERLREQEERLREQEERLCEQEERLCEQEERLREQEERLCEQEERLCEQEERLCEQEKLPGQERLLEEVEKLLEQERRQEEQERLLERERLLDEVEELLEQERLRQQDERLWQQETLRELERLRELERLRELERMLELGWEALYEQRAEPRSGFEELNNENKSTLQLEQQVKELEKSGGAEEPRGSESAAAARPVPGAPVPQGAWMCGQAGWTPQEHPGLSGEAVGTGEAAGGAEEAACHSFRAAENRELNITII</sequence>
<protein>
    <recommendedName>
        <fullName evidence="3">Golgin subfamily A member 6-like protein 10</fullName>
    </recommendedName>
</protein>